<keyword id="KW-0342">GTP-binding</keyword>
<keyword id="KW-0378">Hydrolase</keyword>
<keyword id="KW-0449">Lipoprotein</keyword>
<keyword id="KW-0460">Magnesium</keyword>
<keyword id="KW-0479">Metal-binding</keyword>
<keyword id="KW-0519">Myristate</keyword>
<keyword id="KW-0547">Nucleotide-binding</keyword>
<keyword id="KW-0564">Palmitate</keyword>
<keyword id="KW-1185">Reference proteome</keyword>
<keyword id="KW-0807">Transducer</keyword>
<evidence type="ECO:0000250" key="1">
    <source>
        <dbReference type="UniProtKB" id="P10823"/>
    </source>
</evidence>
<evidence type="ECO:0000250" key="2">
    <source>
        <dbReference type="UniProtKB" id="P18064"/>
    </source>
</evidence>
<evidence type="ECO:0000255" key="3"/>
<evidence type="ECO:0000255" key="4">
    <source>
        <dbReference type="PROSITE-ProRule" id="PRU01230"/>
    </source>
</evidence>
<evidence type="ECO:0000305" key="5"/>
<dbReference type="EMBL" id="U85776">
    <property type="protein sequence ID" value="AAC49725.1"/>
    <property type="molecule type" value="Genomic_DNA"/>
</dbReference>
<dbReference type="EMBL" id="CM003145">
    <property type="protein sequence ID" value="KIS69166.1"/>
    <property type="molecule type" value="Genomic_DNA"/>
</dbReference>
<dbReference type="RefSeq" id="XP_011388933.1">
    <property type="nucleotide sequence ID" value="XM_011390631.1"/>
</dbReference>
<dbReference type="SMR" id="P87033"/>
<dbReference type="FunCoup" id="P87033">
    <property type="interactions" value="90"/>
</dbReference>
<dbReference type="STRING" id="237631.P87033"/>
<dbReference type="EnsemblFungi" id="KIS69166">
    <property type="protein sequence ID" value="KIS69166"/>
    <property type="gene ID" value="UMAG_02517"/>
</dbReference>
<dbReference type="GeneID" id="23563244"/>
<dbReference type="KEGG" id="uma:UMAG_02517"/>
<dbReference type="VEuPathDB" id="FungiDB:UMAG_02517"/>
<dbReference type="eggNOG" id="KOG0082">
    <property type="taxonomic scope" value="Eukaryota"/>
</dbReference>
<dbReference type="HOGENOM" id="CLU_014184_6_0_1"/>
<dbReference type="InParanoid" id="P87033"/>
<dbReference type="OMA" id="INYGHPD"/>
<dbReference type="OrthoDB" id="5817230at2759"/>
<dbReference type="PHI-base" id="PHI:77"/>
<dbReference type="Proteomes" id="UP000000561">
    <property type="component" value="Chromosome 6"/>
</dbReference>
<dbReference type="GO" id="GO:0090726">
    <property type="term" value="C:cortical dynamic polarity patch"/>
    <property type="evidence" value="ECO:0007669"/>
    <property type="project" value="EnsemblFungi"/>
</dbReference>
<dbReference type="GO" id="GO:0005737">
    <property type="term" value="C:cytoplasm"/>
    <property type="evidence" value="ECO:0000318"/>
    <property type="project" value="GO_Central"/>
</dbReference>
<dbReference type="GO" id="GO:0005834">
    <property type="term" value="C:heterotrimeric G-protein complex"/>
    <property type="evidence" value="ECO:0000318"/>
    <property type="project" value="GO_Central"/>
</dbReference>
<dbReference type="GO" id="GO:0001664">
    <property type="term" value="F:G protein-coupled receptor binding"/>
    <property type="evidence" value="ECO:0000318"/>
    <property type="project" value="GO_Central"/>
</dbReference>
<dbReference type="GO" id="GO:0031683">
    <property type="term" value="F:G-protein beta/gamma-subunit complex binding"/>
    <property type="evidence" value="ECO:0000318"/>
    <property type="project" value="GO_Central"/>
</dbReference>
<dbReference type="GO" id="GO:0005525">
    <property type="term" value="F:GTP binding"/>
    <property type="evidence" value="ECO:0007669"/>
    <property type="project" value="UniProtKB-KW"/>
</dbReference>
<dbReference type="GO" id="GO:0003924">
    <property type="term" value="F:GTPase activity"/>
    <property type="evidence" value="ECO:0000318"/>
    <property type="project" value="GO_Central"/>
</dbReference>
<dbReference type="GO" id="GO:0046872">
    <property type="term" value="F:metal ion binding"/>
    <property type="evidence" value="ECO:0007669"/>
    <property type="project" value="UniProtKB-KW"/>
</dbReference>
<dbReference type="GO" id="GO:0007186">
    <property type="term" value="P:G protein-coupled receptor signaling pathway"/>
    <property type="evidence" value="ECO:0007669"/>
    <property type="project" value="InterPro"/>
</dbReference>
<dbReference type="GO" id="GO:0180040">
    <property type="term" value="P:negative regulation of pheromone response MAPK cascade"/>
    <property type="evidence" value="ECO:0007669"/>
    <property type="project" value="EnsemblFungi"/>
</dbReference>
<dbReference type="GO" id="GO:0031139">
    <property type="term" value="P:positive regulation of conjugation with cellular fusion"/>
    <property type="evidence" value="ECO:0007669"/>
    <property type="project" value="EnsemblFungi"/>
</dbReference>
<dbReference type="CDD" id="cd00066">
    <property type="entry name" value="G-alpha"/>
    <property type="match status" value="1"/>
</dbReference>
<dbReference type="FunFam" id="3.40.50.300:FF:000563">
    <property type="entry name" value="Guanine nucleotide-binding protein alpha subunit"/>
    <property type="match status" value="1"/>
</dbReference>
<dbReference type="FunFam" id="1.10.400.10:FF:000009">
    <property type="entry name" value="Guanine nucleotide-binding protein G(O) subunit alpha"/>
    <property type="match status" value="1"/>
</dbReference>
<dbReference type="Gene3D" id="1.10.400.10">
    <property type="entry name" value="GI Alpha 1, domain 2-like"/>
    <property type="match status" value="1"/>
</dbReference>
<dbReference type="Gene3D" id="3.40.50.300">
    <property type="entry name" value="P-loop containing nucleotide triphosphate hydrolases"/>
    <property type="match status" value="1"/>
</dbReference>
<dbReference type="InterPro" id="IPR002975">
    <property type="entry name" value="Fungi_Gprotein_alpha"/>
</dbReference>
<dbReference type="InterPro" id="IPR001019">
    <property type="entry name" value="Gprotein_alpha_su"/>
</dbReference>
<dbReference type="InterPro" id="IPR011025">
    <property type="entry name" value="GproteinA_insert"/>
</dbReference>
<dbReference type="InterPro" id="IPR027417">
    <property type="entry name" value="P-loop_NTPase"/>
</dbReference>
<dbReference type="PANTHER" id="PTHR10218">
    <property type="entry name" value="GTP-BINDING PROTEIN ALPHA SUBUNIT"/>
    <property type="match status" value="1"/>
</dbReference>
<dbReference type="PANTHER" id="PTHR10218:SF242">
    <property type="entry name" value="GUANINE NUCLEOTIDE-BINDING PROTEIN ALPHA-1 SUBUNIT"/>
    <property type="match status" value="1"/>
</dbReference>
<dbReference type="Pfam" id="PF00503">
    <property type="entry name" value="G-alpha"/>
    <property type="match status" value="1"/>
</dbReference>
<dbReference type="PRINTS" id="PR00318">
    <property type="entry name" value="GPROTEINA"/>
</dbReference>
<dbReference type="PRINTS" id="PR01241">
    <property type="entry name" value="GPROTEINAFNG"/>
</dbReference>
<dbReference type="SMART" id="SM00275">
    <property type="entry name" value="G_alpha"/>
    <property type="match status" value="1"/>
</dbReference>
<dbReference type="SUPFAM" id="SSF52540">
    <property type="entry name" value="P-loop containing nucleoside triphosphate hydrolases"/>
    <property type="match status" value="1"/>
</dbReference>
<dbReference type="SUPFAM" id="SSF47895">
    <property type="entry name" value="Transducin (alpha subunit), insertion domain"/>
    <property type="match status" value="1"/>
</dbReference>
<dbReference type="PROSITE" id="PS51882">
    <property type="entry name" value="G_ALPHA"/>
    <property type="match status" value="1"/>
</dbReference>
<organism>
    <name type="scientific">Mycosarcoma maydis</name>
    <name type="common">Corn smut fungus</name>
    <name type="synonym">Ustilago maydis</name>
    <dbReference type="NCBI Taxonomy" id="5270"/>
    <lineage>
        <taxon>Eukaryota</taxon>
        <taxon>Fungi</taxon>
        <taxon>Dikarya</taxon>
        <taxon>Basidiomycota</taxon>
        <taxon>Ustilaginomycotina</taxon>
        <taxon>Ustilaginomycetes</taxon>
        <taxon>Ustilaginales</taxon>
        <taxon>Ustilaginaceae</taxon>
        <taxon>Mycosarcoma</taxon>
    </lineage>
</organism>
<name>GPA2_MYCMD</name>
<gene>
    <name type="primary">GPA2</name>
    <name type="ORF">UMAG_02517</name>
</gene>
<proteinExistence type="inferred from homology"/>
<accession>P87033</accession>
<accession>A0A0D1DZW5</accession>
<accession>Q4PBJ6</accession>
<comment type="function">
    <text>Guanine nucleotide-binding proteins (G proteins) are involved as modulators or transducers in various transmembrane signaling systems.</text>
</comment>
<comment type="cofactor">
    <cofactor evidence="2">
        <name>Mg(2+)</name>
        <dbReference type="ChEBI" id="CHEBI:18420"/>
    </cofactor>
</comment>
<comment type="subunit">
    <text>G proteins are composed of 3 units; alpha, beta and gamma. The alpha chain contains the guanine nucleotide binding site.</text>
</comment>
<comment type="similarity">
    <text evidence="5">Belongs to the G-alpha family.</text>
</comment>
<sequence length="356" mass="41307">MGACLSAEQSHDTPEYKRSKALDRRIKEDEKNLSREVKLLLLGAGESGKSTILKSMRIIHHIPFTDEERENFRRLVFLNLVQGMKTILDVMEEWSIDFQDDSNIDHLLLFVSYPDISEDEPFPTNYLVALKDLWLDQGVQSVYRRGNEAAVPDNMSYYYTDLDRLFSPSYIPSEDDILRCRNKTTGIIETTFPLQDHVYRIFDVGGQRSERKKWIHCFENVTAVLFCVALSGYDSCLVEDKDSNQMQEALMLFDSICNSKWFARTSMILFLNKVDVFRQKIAYSSIKHYFPDYDGDDQDFNAARSYFKARFCRLNRSVNKEIYPSFTNATDVSLLKIVMASVTDIILTNNLRDIVL</sequence>
<protein>
    <recommendedName>
        <fullName>Guanine nucleotide-binding protein alpha-2 subunit</fullName>
    </recommendedName>
</protein>
<reference key="1">
    <citation type="journal article" date="1997" name="EMBO J.">
        <title>G proteins in Ustilago maydis: transmission of multiple signals?</title>
        <authorList>
            <person name="Regenfelder E."/>
            <person name="Spellig T."/>
            <person name="Hartmann A."/>
            <person name="Lauenstein S."/>
            <person name="Boelker M."/>
            <person name="Kahmann R."/>
        </authorList>
    </citation>
    <scope>NUCLEOTIDE SEQUENCE [GENOMIC DNA]</scope>
    <source>
        <strain>FB1</strain>
    </source>
</reference>
<reference key="2">
    <citation type="journal article" date="2006" name="Nature">
        <title>Insights from the genome of the biotrophic fungal plant pathogen Ustilago maydis.</title>
        <authorList>
            <person name="Kaemper J."/>
            <person name="Kahmann R."/>
            <person name="Boelker M."/>
            <person name="Ma L.-J."/>
            <person name="Brefort T."/>
            <person name="Saville B.J."/>
            <person name="Banuett F."/>
            <person name="Kronstad J.W."/>
            <person name="Gold S.E."/>
            <person name="Mueller O."/>
            <person name="Perlin M.H."/>
            <person name="Woesten H.A.B."/>
            <person name="de Vries R."/>
            <person name="Ruiz-Herrera J."/>
            <person name="Reynaga-Pena C.G."/>
            <person name="Snetselaar K."/>
            <person name="McCann M."/>
            <person name="Perez-Martin J."/>
            <person name="Feldbruegge M."/>
            <person name="Basse C.W."/>
            <person name="Steinberg G."/>
            <person name="Ibeas J.I."/>
            <person name="Holloman W."/>
            <person name="Guzman P."/>
            <person name="Farman M.L."/>
            <person name="Stajich J.E."/>
            <person name="Sentandreu R."/>
            <person name="Gonzalez-Prieto J.M."/>
            <person name="Kennell J.C."/>
            <person name="Molina L."/>
            <person name="Schirawski J."/>
            <person name="Mendoza-Mendoza A."/>
            <person name="Greilinger D."/>
            <person name="Muench K."/>
            <person name="Roessel N."/>
            <person name="Scherer M."/>
            <person name="Vranes M."/>
            <person name="Ladendorf O."/>
            <person name="Vincon V."/>
            <person name="Fuchs U."/>
            <person name="Sandrock B."/>
            <person name="Meng S."/>
            <person name="Ho E.C.H."/>
            <person name="Cahill M.J."/>
            <person name="Boyce K.J."/>
            <person name="Klose J."/>
            <person name="Klosterman S.J."/>
            <person name="Deelstra H.J."/>
            <person name="Ortiz-Castellanos L."/>
            <person name="Li W."/>
            <person name="Sanchez-Alonso P."/>
            <person name="Schreier P.H."/>
            <person name="Haeuser-Hahn I."/>
            <person name="Vaupel M."/>
            <person name="Koopmann E."/>
            <person name="Friedrich G."/>
            <person name="Voss H."/>
            <person name="Schlueter T."/>
            <person name="Margolis J."/>
            <person name="Platt D."/>
            <person name="Swimmer C."/>
            <person name="Gnirke A."/>
            <person name="Chen F."/>
            <person name="Vysotskaia V."/>
            <person name="Mannhaupt G."/>
            <person name="Gueldener U."/>
            <person name="Muensterkoetter M."/>
            <person name="Haase D."/>
            <person name="Oesterheld M."/>
            <person name="Mewes H.-W."/>
            <person name="Mauceli E.W."/>
            <person name="DeCaprio D."/>
            <person name="Wade C.M."/>
            <person name="Butler J."/>
            <person name="Young S.K."/>
            <person name="Jaffe D.B."/>
            <person name="Calvo S.E."/>
            <person name="Nusbaum C."/>
            <person name="Galagan J.E."/>
            <person name="Birren B.W."/>
        </authorList>
    </citation>
    <scope>NUCLEOTIDE SEQUENCE [LARGE SCALE GENOMIC DNA]</scope>
    <source>
        <strain>DSM 14603 / FGSC 9021 / UM521</strain>
    </source>
</reference>
<reference key="3">
    <citation type="submission" date="2014-09" db="EMBL/GenBank/DDBJ databases">
        <authorList>
            <person name="Gueldener U."/>
            <person name="Muensterkoetter M."/>
            <person name="Walter M.C."/>
            <person name="Mannhaupt G."/>
            <person name="Kahmann R."/>
        </authorList>
    </citation>
    <scope>GENOME REANNOTATION</scope>
    <source>
        <strain>DSM 14603 / FGSC 9021 / UM521</strain>
    </source>
</reference>
<feature type="initiator methionine" description="Removed" evidence="3">
    <location>
        <position position="1"/>
    </location>
</feature>
<feature type="chain" id="PRO_0000203613" description="Guanine nucleotide-binding protein alpha-2 subunit">
    <location>
        <begin position="2"/>
        <end position="356"/>
    </location>
</feature>
<feature type="domain" description="G-alpha" evidence="4">
    <location>
        <begin position="35"/>
        <end position="356"/>
    </location>
</feature>
<feature type="region of interest" description="G1 motif" evidence="4">
    <location>
        <begin position="38"/>
        <end position="51"/>
    </location>
</feature>
<feature type="region of interest" description="G2 motif" evidence="4">
    <location>
        <begin position="176"/>
        <end position="184"/>
    </location>
</feature>
<feature type="region of interest" description="G3 motif" evidence="4">
    <location>
        <begin position="199"/>
        <end position="208"/>
    </location>
</feature>
<feature type="region of interest" description="G4 motif" evidence="4">
    <location>
        <begin position="268"/>
        <end position="275"/>
    </location>
</feature>
<feature type="region of interest" description="G5 motif" evidence="4">
    <location>
        <begin position="327"/>
        <end position="332"/>
    </location>
</feature>
<feature type="binding site" evidence="2">
    <location>
        <position position="46"/>
    </location>
    <ligand>
        <name>GTP</name>
        <dbReference type="ChEBI" id="CHEBI:37565"/>
    </ligand>
</feature>
<feature type="binding site" evidence="2">
    <location>
        <position position="47"/>
    </location>
    <ligand>
        <name>GTP</name>
        <dbReference type="ChEBI" id="CHEBI:37565"/>
    </ligand>
</feature>
<feature type="binding site" evidence="2">
    <location>
        <position position="48"/>
    </location>
    <ligand>
        <name>GTP</name>
        <dbReference type="ChEBI" id="CHEBI:37565"/>
    </ligand>
</feature>
<feature type="binding site" evidence="2">
    <location>
        <position position="49"/>
    </location>
    <ligand>
        <name>GTP</name>
        <dbReference type="ChEBI" id="CHEBI:37565"/>
    </ligand>
</feature>
<feature type="binding site" evidence="2">
    <location>
        <position position="50"/>
    </location>
    <ligand>
        <name>GTP</name>
        <dbReference type="ChEBI" id="CHEBI:37565"/>
    </ligand>
</feature>
<feature type="binding site" evidence="2">
    <location>
        <position position="50"/>
    </location>
    <ligand>
        <name>Mg(2+)</name>
        <dbReference type="ChEBI" id="CHEBI:18420"/>
    </ligand>
</feature>
<feature type="binding site" evidence="2">
    <location>
        <position position="51"/>
    </location>
    <ligand>
        <name>GTP</name>
        <dbReference type="ChEBI" id="CHEBI:37565"/>
    </ligand>
</feature>
<feature type="binding site" evidence="2">
    <location>
        <position position="153"/>
    </location>
    <ligand>
        <name>GTP</name>
        <dbReference type="ChEBI" id="CHEBI:37565"/>
    </ligand>
</feature>
<feature type="binding site" evidence="2">
    <location>
        <position position="178"/>
    </location>
    <ligand>
        <name>GTP</name>
        <dbReference type="ChEBI" id="CHEBI:37565"/>
    </ligand>
</feature>
<feature type="binding site" evidence="2">
    <location>
        <position position="184"/>
    </location>
    <ligand>
        <name>GTP</name>
        <dbReference type="ChEBI" id="CHEBI:37565"/>
    </ligand>
</feature>
<feature type="binding site" evidence="2">
    <location>
        <position position="184"/>
    </location>
    <ligand>
        <name>Mg(2+)</name>
        <dbReference type="ChEBI" id="CHEBI:18420"/>
    </ligand>
</feature>
<feature type="binding site" evidence="2">
    <location>
        <position position="206"/>
    </location>
    <ligand>
        <name>GTP</name>
        <dbReference type="ChEBI" id="CHEBI:37565"/>
    </ligand>
</feature>
<feature type="binding site" evidence="2">
    <location>
        <position position="272"/>
    </location>
    <ligand>
        <name>GTP</name>
        <dbReference type="ChEBI" id="CHEBI:37565"/>
    </ligand>
</feature>
<feature type="binding site" evidence="2">
    <location>
        <position position="273"/>
    </location>
    <ligand>
        <name>GTP</name>
        <dbReference type="ChEBI" id="CHEBI:37565"/>
    </ligand>
</feature>
<feature type="binding site" evidence="2">
    <location>
        <position position="275"/>
    </location>
    <ligand>
        <name>GTP</name>
        <dbReference type="ChEBI" id="CHEBI:37565"/>
    </ligand>
</feature>
<feature type="binding site" evidence="2">
    <location>
        <position position="329"/>
    </location>
    <ligand>
        <name>GTP</name>
        <dbReference type="ChEBI" id="CHEBI:37565"/>
    </ligand>
</feature>
<feature type="lipid moiety-binding region" description="N-myristoyl glycine" evidence="1">
    <location>
        <position position="2"/>
    </location>
</feature>
<feature type="lipid moiety-binding region" description="S-palmitoyl cysteine" evidence="1">
    <location>
        <position position="4"/>
    </location>
</feature>